<reference key="1">
    <citation type="submission" date="2007-03" db="EMBL/GenBank/DDBJ databases">
        <title>Complete sequence of chromosome 1 of Burkholderia vietnamiensis G4.</title>
        <authorList>
            <consortium name="US DOE Joint Genome Institute"/>
            <person name="Copeland A."/>
            <person name="Lucas S."/>
            <person name="Lapidus A."/>
            <person name="Barry K."/>
            <person name="Detter J.C."/>
            <person name="Glavina del Rio T."/>
            <person name="Hammon N."/>
            <person name="Israni S."/>
            <person name="Dalin E."/>
            <person name="Tice H."/>
            <person name="Pitluck S."/>
            <person name="Chain P."/>
            <person name="Malfatti S."/>
            <person name="Shin M."/>
            <person name="Vergez L."/>
            <person name="Schmutz J."/>
            <person name="Larimer F."/>
            <person name="Land M."/>
            <person name="Hauser L."/>
            <person name="Kyrpides N."/>
            <person name="Tiedje J."/>
            <person name="Richardson P."/>
        </authorList>
    </citation>
    <scope>NUCLEOTIDE SEQUENCE [LARGE SCALE GENOMIC DNA]</scope>
    <source>
        <strain>G4 / LMG 22486</strain>
    </source>
</reference>
<organism>
    <name type="scientific">Burkholderia vietnamiensis (strain G4 / LMG 22486)</name>
    <name type="common">Burkholderia cepacia (strain R1808)</name>
    <dbReference type="NCBI Taxonomy" id="269482"/>
    <lineage>
        <taxon>Bacteria</taxon>
        <taxon>Pseudomonadati</taxon>
        <taxon>Pseudomonadota</taxon>
        <taxon>Betaproteobacteria</taxon>
        <taxon>Burkholderiales</taxon>
        <taxon>Burkholderiaceae</taxon>
        <taxon>Burkholderia</taxon>
        <taxon>Burkholderia cepacia complex</taxon>
    </lineage>
</organism>
<name>PUR5_BURVG</name>
<accession>A4JBT0</accession>
<keyword id="KW-0067">ATP-binding</keyword>
<keyword id="KW-0963">Cytoplasm</keyword>
<keyword id="KW-0436">Ligase</keyword>
<keyword id="KW-0547">Nucleotide-binding</keyword>
<keyword id="KW-0658">Purine biosynthesis</keyword>
<sequence length="351" mass="36772">MNPPKSAPDAQGLSYRDAGVDIDAGDALIDKIKPFAKKTLRDGVLGGIGGFGALFEVPKKYREPVLVSGTDGVGTKLKLAFHLNKHDTVGQDLVAMSVNDILVQGAEPLFFLDYFACGKLDVDTAATVVKGIAHGCELSGCALIGGETAEMPGMYPDGEYDLAGFAVGAVEKSKIIDGSTIGAGDVVLGLASSGIHSNGFSLVRKIIERANPDLSADFHGRSLADTLMAPTRIYVKPLLALMQKLTVKGMAHITGGGLVENIPRVLREGLTAELDQNAWPLPPLFKWLQEHGGVADAEMHRVFNCGIGMAVIVAAADADAAIADLTAAGEQVWKIGTVRASREGEAQTVVV</sequence>
<proteinExistence type="inferred from homology"/>
<evidence type="ECO:0000255" key="1">
    <source>
        <dbReference type="HAMAP-Rule" id="MF_00741"/>
    </source>
</evidence>
<protein>
    <recommendedName>
        <fullName evidence="1">Phosphoribosylformylglycinamidine cyclo-ligase</fullName>
        <ecNumber evidence="1">6.3.3.1</ecNumber>
    </recommendedName>
    <alternativeName>
        <fullName evidence="1">AIR synthase</fullName>
    </alternativeName>
    <alternativeName>
        <fullName evidence="1">AIRS</fullName>
    </alternativeName>
    <alternativeName>
        <fullName evidence="1">Phosphoribosyl-aminoimidazole synthetase</fullName>
    </alternativeName>
</protein>
<comment type="catalytic activity">
    <reaction evidence="1">
        <text>2-formamido-N(1)-(5-O-phospho-beta-D-ribosyl)acetamidine + ATP = 5-amino-1-(5-phospho-beta-D-ribosyl)imidazole + ADP + phosphate + H(+)</text>
        <dbReference type="Rhea" id="RHEA:23032"/>
        <dbReference type="ChEBI" id="CHEBI:15378"/>
        <dbReference type="ChEBI" id="CHEBI:30616"/>
        <dbReference type="ChEBI" id="CHEBI:43474"/>
        <dbReference type="ChEBI" id="CHEBI:137981"/>
        <dbReference type="ChEBI" id="CHEBI:147287"/>
        <dbReference type="ChEBI" id="CHEBI:456216"/>
        <dbReference type="EC" id="6.3.3.1"/>
    </reaction>
</comment>
<comment type="pathway">
    <text evidence="1">Purine metabolism; IMP biosynthesis via de novo pathway; 5-amino-1-(5-phospho-D-ribosyl)imidazole from N(2)-formyl-N(1)-(5-phospho-D-ribosyl)glycinamide: step 2/2.</text>
</comment>
<comment type="subcellular location">
    <subcellularLocation>
        <location evidence="1">Cytoplasm</location>
    </subcellularLocation>
</comment>
<comment type="similarity">
    <text evidence="1">Belongs to the AIR synthase family.</text>
</comment>
<feature type="chain" id="PRO_1000046431" description="Phosphoribosylformylglycinamidine cyclo-ligase">
    <location>
        <begin position="1"/>
        <end position="351"/>
    </location>
</feature>
<dbReference type="EC" id="6.3.3.1" evidence="1"/>
<dbReference type="EMBL" id="CP000614">
    <property type="protein sequence ID" value="ABO53733.1"/>
    <property type="molecule type" value="Genomic_DNA"/>
</dbReference>
<dbReference type="SMR" id="A4JBT0"/>
<dbReference type="KEGG" id="bvi:Bcep1808_0721"/>
<dbReference type="eggNOG" id="COG0150">
    <property type="taxonomic scope" value="Bacteria"/>
</dbReference>
<dbReference type="HOGENOM" id="CLU_047116_0_0_4"/>
<dbReference type="UniPathway" id="UPA00074">
    <property type="reaction ID" value="UER00129"/>
</dbReference>
<dbReference type="Proteomes" id="UP000002287">
    <property type="component" value="Chromosome 1"/>
</dbReference>
<dbReference type="GO" id="GO:0005829">
    <property type="term" value="C:cytosol"/>
    <property type="evidence" value="ECO:0007669"/>
    <property type="project" value="TreeGrafter"/>
</dbReference>
<dbReference type="GO" id="GO:0005524">
    <property type="term" value="F:ATP binding"/>
    <property type="evidence" value="ECO:0007669"/>
    <property type="project" value="UniProtKB-KW"/>
</dbReference>
<dbReference type="GO" id="GO:0004637">
    <property type="term" value="F:phosphoribosylamine-glycine ligase activity"/>
    <property type="evidence" value="ECO:0007669"/>
    <property type="project" value="TreeGrafter"/>
</dbReference>
<dbReference type="GO" id="GO:0004641">
    <property type="term" value="F:phosphoribosylformylglycinamidine cyclo-ligase activity"/>
    <property type="evidence" value="ECO:0007669"/>
    <property type="project" value="UniProtKB-UniRule"/>
</dbReference>
<dbReference type="GO" id="GO:0006189">
    <property type="term" value="P:'de novo' IMP biosynthetic process"/>
    <property type="evidence" value="ECO:0007669"/>
    <property type="project" value="UniProtKB-UniRule"/>
</dbReference>
<dbReference type="GO" id="GO:0046084">
    <property type="term" value="P:adenine biosynthetic process"/>
    <property type="evidence" value="ECO:0007669"/>
    <property type="project" value="TreeGrafter"/>
</dbReference>
<dbReference type="CDD" id="cd02196">
    <property type="entry name" value="PurM"/>
    <property type="match status" value="1"/>
</dbReference>
<dbReference type="FunFam" id="3.30.1330.10:FF:000001">
    <property type="entry name" value="Phosphoribosylformylglycinamidine cyclo-ligase"/>
    <property type="match status" value="1"/>
</dbReference>
<dbReference type="FunFam" id="3.90.650.10:FF:000001">
    <property type="entry name" value="Phosphoribosylformylglycinamidine cyclo-ligase"/>
    <property type="match status" value="1"/>
</dbReference>
<dbReference type="Gene3D" id="3.90.650.10">
    <property type="entry name" value="PurM-like C-terminal domain"/>
    <property type="match status" value="1"/>
</dbReference>
<dbReference type="Gene3D" id="3.30.1330.10">
    <property type="entry name" value="PurM-like, N-terminal domain"/>
    <property type="match status" value="1"/>
</dbReference>
<dbReference type="HAMAP" id="MF_00741">
    <property type="entry name" value="AIRS"/>
    <property type="match status" value="1"/>
</dbReference>
<dbReference type="InterPro" id="IPR010918">
    <property type="entry name" value="PurM-like_C_dom"/>
</dbReference>
<dbReference type="InterPro" id="IPR036676">
    <property type="entry name" value="PurM-like_C_sf"/>
</dbReference>
<dbReference type="InterPro" id="IPR016188">
    <property type="entry name" value="PurM-like_N"/>
</dbReference>
<dbReference type="InterPro" id="IPR036921">
    <property type="entry name" value="PurM-like_N_sf"/>
</dbReference>
<dbReference type="InterPro" id="IPR004733">
    <property type="entry name" value="PurM_cligase"/>
</dbReference>
<dbReference type="NCBIfam" id="TIGR00878">
    <property type="entry name" value="purM"/>
    <property type="match status" value="1"/>
</dbReference>
<dbReference type="PANTHER" id="PTHR10520:SF12">
    <property type="entry name" value="TRIFUNCTIONAL PURINE BIOSYNTHETIC PROTEIN ADENOSINE-3"/>
    <property type="match status" value="1"/>
</dbReference>
<dbReference type="PANTHER" id="PTHR10520">
    <property type="entry name" value="TRIFUNCTIONAL PURINE BIOSYNTHETIC PROTEIN ADENOSINE-3-RELATED"/>
    <property type="match status" value="1"/>
</dbReference>
<dbReference type="Pfam" id="PF00586">
    <property type="entry name" value="AIRS"/>
    <property type="match status" value="1"/>
</dbReference>
<dbReference type="Pfam" id="PF02769">
    <property type="entry name" value="AIRS_C"/>
    <property type="match status" value="1"/>
</dbReference>
<dbReference type="SUPFAM" id="SSF56042">
    <property type="entry name" value="PurM C-terminal domain-like"/>
    <property type="match status" value="1"/>
</dbReference>
<dbReference type="SUPFAM" id="SSF55326">
    <property type="entry name" value="PurM N-terminal domain-like"/>
    <property type="match status" value="1"/>
</dbReference>
<gene>
    <name evidence="1" type="primary">purM</name>
    <name type="ordered locus">Bcep1808_0721</name>
</gene>